<feature type="signal peptide" evidence="2">
    <location>
        <begin position="1"/>
        <end position="17"/>
    </location>
</feature>
<feature type="propeptide" id="PRO_0000027053" evidence="2">
    <location>
        <begin position="18"/>
        <end position="186"/>
    </location>
</feature>
<feature type="chain" id="PRO_0000027054" description="Membrane-bound transcription factor site-1 protease">
    <location>
        <begin position="187"/>
        <end position="1052"/>
    </location>
</feature>
<feature type="topological domain" description="Lumenal" evidence="2">
    <location>
        <begin position="187"/>
        <end position="999"/>
    </location>
</feature>
<feature type="transmembrane region" description="Helical" evidence="2">
    <location>
        <begin position="1000"/>
        <end position="1022"/>
    </location>
</feature>
<feature type="topological domain" description="Cytoplasmic" evidence="2">
    <location>
        <begin position="1023"/>
        <end position="1052"/>
    </location>
</feature>
<feature type="domain" description="Peptidase S8" evidence="3">
    <location>
        <begin position="190"/>
        <end position="472"/>
    </location>
</feature>
<feature type="region of interest" description="Disordered" evidence="4">
    <location>
        <begin position="877"/>
        <end position="900"/>
    </location>
</feature>
<feature type="region of interest" description="Disordered" evidence="4">
    <location>
        <begin position="1026"/>
        <end position="1052"/>
    </location>
</feature>
<feature type="compositionally biased region" description="Polar residues" evidence="4">
    <location>
        <begin position="877"/>
        <end position="887"/>
    </location>
</feature>
<feature type="compositionally biased region" description="Basic residues" evidence="4">
    <location>
        <begin position="1026"/>
        <end position="1037"/>
    </location>
</feature>
<feature type="active site" description="Charge relay system" evidence="3">
    <location>
        <position position="218"/>
    </location>
</feature>
<feature type="active site" description="Charge relay system" evidence="3">
    <location>
        <position position="249"/>
    </location>
</feature>
<feature type="active site" description="Charge relay system" evidence="3">
    <location>
        <position position="414"/>
    </location>
</feature>
<feature type="site" description="Cleavage; by autolysis" evidence="1">
    <location>
        <begin position="186"/>
        <end position="187"/>
    </location>
</feature>
<feature type="modified residue" description="Phosphoserine" evidence="1">
    <location>
        <position position="168"/>
    </location>
</feature>
<feature type="glycosylation site" description="N-linked (GlcNAc...) asparagine" evidence="2">
    <location>
        <position position="148"/>
    </location>
</feature>
<feature type="glycosylation site" description="N-linked (GlcNAc...) asparagine" evidence="2">
    <location>
        <position position="236"/>
    </location>
</feature>
<feature type="glycosylation site" description="N-linked (GlcNAc...) asparagine" evidence="2">
    <location>
        <position position="305"/>
    </location>
</feature>
<feature type="glycosylation site" description="N-linked (GlcNAc...) asparagine" evidence="2">
    <location>
        <position position="515"/>
    </location>
</feature>
<feature type="glycosylation site" description="N-linked (GlcNAc...) asparagine" evidence="2">
    <location>
        <position position="728"/>
    </location>
</feature>
<feature type="glycosylation site" description="N-linked (GlcNAc...) asparagine" evidence="2">
    <location>
        <position position="939"/>
    </location>
</feature>
<feature type="sequence conflict" description="In Ref. 3; AAH57198." evidence="8" ref="3">
    <original>V</original>
    <variation>M</variation>
    <location>
        <position position="714"/>
    </location>
</feature>
<protein>
    <recommendedName>
        <fullName evidence="8">Membrane-bound transcription factor site-1 protease</fullName>
        <ecNumber evidence="6">3.4.21.112</ecNumber>
    </recommendedName>
    <alternativeName>
        <fullName>Endopeptidase S1P</fullName>
    </alternativeName>
    <alternativeName>
        <fullName>Sterol-regulated luminal protease</fullName>
    </alternativeName>
    <alternativeName>
        <fullName evidence="7">Subtilisin/kexin isozyme 1</fullName>
        <shortName evidence="7">SKI-1</shortName>
    </alternativeName>
</protein>
<gene>
    <name type="primary">Mbtps1</name>
    <name type="synonym">S1p</name>
    <name evidence="7" type="synonym">Ski1</name>
</gene>
<keyword id="KW-0068">Autocatalytic cleavage</keyword>
<keyword id="KW-0106">Calcium</keyword>
<keyword id="KW-0153">Cholesterol metabolism</keyword>
<keyword id="KW-0256">Endoplasmic reticulum</keyword>
<keyword id="KW-0325">Glycoprotein</keyword>
<keyword id="KW-0333">Golgi apparatus</keyword>
<keyword id="KW-0378">Hydrolase</keyword>
<keyword id="KW-0443">Lipid metabolism</keyword>
<keyword id="KW-0472">Membrane</keyword>
<keyword id="KW-0597">Phosphoprotein</keyword>
<keyword id="KW-0645">Protease</keyword>
<keyword id="KW-1185">Reference proteome</keyword>
<keyword id="KW-0720">Serine protease</keyword>
<keyword id="KW-0732">Signal</keyword>
<keyword id="KW-0753">Steroid metabolism</keyword>
<keyword id="KW-1207">Sterol metabolism</keyword>
<keyword id="KW-0812">Transmembrane</keyword>
<keyword id="KW-1133">Transmembrane helix</keyword>
<keyword id="KW-0865">Zymogen</keyword>
<sequence>MKLVSTWLLVLVVLLCGKRHLGDRLGTRALEKAPCPSCSHLTLKVEFSSTVVEYEYIVAFNGYFTAKARNSFISSALKSSEVENWRIIPRNNPSSDYPSDFEVIQIKEKQKAGLLTLEDHPNIKRVTPQRKVFRSLKFAESNPIVPCNETRWSQKWQSSRPLKRASLSLGSGFWHATGRHSSRRLLRAIPRQVAQTLQADVLWQMGYTGANVRVAVFDTGLSEKHPHFKNVKERTNWTNERTLDDGLGHGTFVAGVIASMRECQGFAPDAELHIFRVFTNNQVSYTSWFLDAFNYAILKKMDVLNLSIGGPDFMDHPFVDKVWELTANNVIMVSAIGNDGPLYGTLNNPADQMDVIGVGGIDFEDNIARFSSRGMTTWELPGGYGRVKPDIVTYGAGVRGSGVKGGCRALSGTSVASPVVAGAVTLLVSTVQKRELVNPASVKQALIASARRLPGVNMFEQGHGKLDLLRAYQILSSYKPQASLSPSYIDLTECPYMWPYCSQPIYYGGMPTIVNVTILNGMGVTGRIVDKPEWRPYLPQNGDNIEVAFSYSSVLWPWSGYLAISISVTKKAASWEGIAQGHIMITVASPAETELHSGAEHTSTVKLPIKVKIIPTPPRSKRVLWDQYHNLRYPPGYFPRDNLRMKNDPLDWNGDHVHTNFRDMYQHLRSMGYFVEVLGAPFTCFDATQYGTLLLVDSEEEYFPEEIAKLRRDVDNGLSLVIFSDWYNTSVMRKVKFYDENTRQWWMPDTGGANIPALNELLSVWNMGFSDGLYEGEFVLANHDMYYASGCSIAKFPEDGVVITQTFKDQGLEVLKQETAVVENVPILGLYQIPSEGGGRIVLYGDSNCLDDSHRQKDCFWLLDALLQYTSYGVTPPSLSHSGNRQRPPSGAGLAPPERMEGNHLHRYSKVLEAHLGDPKPRPLPACPHLSWAKPQPLNETAPSNLWKHQKLLSIDLDKVVLPNFRSNRPQVRPLSPGESGAWDIPGGIMPGRYNQEVGQTIPVFAFLGAMVALAFFVVQISKAKSRPKRRRPRAKRPQLAQQAHPARTPSV</sequence>
<accession>Q9WTZ2</accession>
<accession>Q6PG67</accession>
<comment type="function">
    <text evidence="1 5">Serine protease that cleaves after hydrophobic or small residues, provided that Arg or Lys is in position P4: known substrates include SREBF1/SREBP1, SREBF2/SREBP2, BDNF, GNPTAB, ATF6, ATF6B and FAM20C. Cleaves substrates after Arg-Ser-Val-Leu (SREBP2), Arg-His-Leu-Leu (ATF6), Arg-Gly-Leu-Thr (BDNF) and its own propeptide after Arg-Arg-Leu-Leu. Catalyzes the first step regulated intramembrane proteolysis activation of the sterol regulatory element-binding proteins (SREBPs) SREBF1/SREBP1 and SREBF2/SREBP2. Also mediates the first step of the regulated intramembrane proteolytic activation of the cyclic AMP-dependent transcription factor ATF-6 (ATF6 and ATF6B). Mediates the protein cleavage of GNPTAB into subunit alpha and beta, thereby participating in biogenesis of lysosomes. Cleaves the propeptide from FAM20C which is required for FAM20C secretion from the Golgi apparatus membrane and for enhancement of FAM20C kinase activity, promoting osteoblast differentiation and biomineralization (PubMed:34349020). Involved in the regulation of M6P-dependent Golgi-to-lysosome trafficking of lysosomal enzymes. It is required for the activation of CREB3L2/BBF2H7, a transcriptional activator of MIA3/TANGO and other genes controlling mega vesicle formation. Therefore, it plays a key role in the regulation of mega vesicle-mediated collagen trafficking. In astrocytes and osteoblasts, upon DNA damage and ER stress, mediates the first step of the regulated intramembrane proteolytic activation of the transcription factor CREB3L1, leading to the inhibition of cell-cycle progression (By similarity).</text>
</comment>
<comment type="catalytic activity">
    <reaction evidence="6">
        <text>Processes precursors containing basic and hydrophobic/aliphatic residues at P4 and P2, respectively, with a relatively relaxed acceptance of amino acids at P1 and P3.</text>
        <dbReference type="EC" id="3.4.21.112"/>
    </reaction>
</comment>
<comment type="cofactor">
    <cofactor evidence="1">
        <name>Ca(2+)</name>
        <dbReference type="ChEBI" id="CHEBI:29108"/>
    </cofactor>
</comment>
<comment type="activity regulation">
    <text evidence="1">Inhibited by divalent copper and zinc ions, but not by nickel or cobalt. Inhibited by its prosegment, but not smaller fragments. Inhibited by 4-(2-aminoethyl)benzenesulfonyl fluoride (AEBSF), a serine protease inhibitor.</text>
</comment>
<comment type="subunit">
    <text evidence="1">Interacts with LYSET; this interaction bridges GNPTAB to MBTPS1.</text>
</comment>
<comment type="subcellular location">
    <subcellularLocation>
        <location evidence="1">Endoplasmic reticulum membrane</location>
        <topology evidence="2">Single-pass type I membrane protein</topology>
    </subcellularLocation>
    <subcellularLocation>
        <location evidence="6">Golgi apparatus membrane</location>
        <topology evidence="2">Single-pass type I membrane protein</topology>
    </subcellularLocation>
    <text evidence="1">May sort to other organelles, including lysosomal and/or endosomal compartments.</text>
</comment>
<comment type="PTM">
    <text evidence="1">The 148 kDa zymogen is processed progressively into two membrane-bound 120 and 106 kDa forms in the endoplasmic reticulum, and late into a secreted 98 kDa form. The propeptide is autocatalytically removed through an intramolecular cleavage after Leu-186. Further cleavage generates 14, 10, and 8 kDa intermediates.</text>
</comment>
<comment type="similarity">
    <text evidence="8">Belongs to the peptidase S8 family.</text>
</comment>
<organism>
    <name type="scientific">Mus musculus</name>
    <name type="common">Mouse</name>
    <dbReference type="NCBI Taxonomy" id="10090"/>
    <lineage>
        <taxon>Eukaryota</taxon>
        <taxon>Metazoa</taxon>
        <taxon>Chordata</taxon>
        <taxon>Craniata</taxon>
        <taxon>Vertebrata</taxon>
        <taxon>Euteleostomi</taxon>
        <taxon>Mammalia</taxon>
        <taxon>Eutheria</taxon>
        <taxon>Euarchontoglires</taxon>
        <taxon>Glires</taxon>
        <taxon>Rodentia</taxon>
        <taxon>Myomorpha</taxon>
        <taxon>Muroidea</taxon>
        <taxon>Muridae</taxon>
        <taxon>Murinae</taxon>
        <taxon>Mus</taxon>
        <taxon>Mus</taxon>
    </lineage>
</organism>
<dbReference type="EC" id="3.4.21.112" evidence="6"/>
<dbReference type="EMBL" id="AF094820">
    <property type="protein sequence ID" value="AAD27010.1"/>
    <property type="molecule type" value="mRNA"/>
</dbReference>
<dbReference type="EMBL" id="AK029048">
    <property type="protein sequence ID" value="BAC26263.1"/>
    <property type="molecule type" value="mRNA"/>
</dbReference>
<dbReference type="EMBL" id="BC054837">
    <property type="protein sequence ID" value="AAH54837.1"/>
    <property type="molecule type" value="mRNA"/>
</dbReference>
<dbReference type="EMBL" id="BC057198">
    <property type="protein sequence ID" value="AAH57198.1"/>
    <property type="molecule type" value="mRNA"/>
</dbReference>
<dbReference type="CCDS" id="CCDS22707.1"/>
<dbReference type="RefSeq" id="NP_001161382.1">
    <property type="nucleotide sequence ID" value="NM_001167910.1"/>
</dbReference>
<dbReference type="RefSeq" id="NP_062683.3">
    <property type="nucleotide sequence ID" value="NM_019709.4"/>
</dbReference>
<dbReference type="RefSeq" id="XP_011246751.1">
    <property type="nucleotide sequence ID" value="XM_011248449.4"/>
</dbReference>
<dbReference type="RefSeq" id="XP_011246752.1">
    <property type="nucleotide sequence ID" value="XM_011248450.3"/>
</dbReference>
<dbReference type="RefSeq" id="XP_030099551.1">
    <property type="nucleotide sequence ID" value="XM_030243691.2"/>
</dbReference>
<dbReference type="SMR" id="Q9WTZ2"/>
<dbReference type="BioGRID" id="207992">
    <property type="interactions" value="3"/>
</dbReference>
<dbReference type="FunCoup" id="Q9WTZ2">
    <property type="interactions" value="2241"/>
</dbReference>
<dbReference type="STRING" id="10090.ENSMUSP00000095965"/>
<dbReference type="MEROPS" id="S08.063"/>
<dbReference type="GlyCosmos" id="Q9WTZ2">
    <property type="glycosylation" value="6 sites, No reported glycans"/>
</dbReference>
<dbReference type="GlyGen" id="Q9WTZ2">
    <property type="glycosylation" value="8 sites, 2 N-linked glycans (2 sites)"/>
</dbReference>
<dbReference type="iPTMnet" id="Q9WTZ2"/>
<dbReference type="PhosphoSitePlus" id="Q9WTZ2"/>
<dbReference type="PaxDb" id="10090-ENSMUSP00000095965"/>
<dbReference type="ProteomicsDB" id="293435"/>
<dbReference type="Pumba" id="Q9WTZ2"/>
<dbReference type="Antibodypedia" id="1735">
    <property type="antibodies" value="126 antibodies from 24 providers"/>
</dbReference>
<dbReference type="DNASU" id="56453"/>
<dbReference type="Ensembl" id="ENSMUST00000081381.6">
    <property type="protein sequence ID" value="ENSMUSP00000080117.5"/>
    <property type="gene ID" value="ENSMUSG00000031835.17"/>
</dbReference>
<dbReference type="Ensembl" id="ENSMUST00000098362.11">
    <property type="protein sequence ID" value="ENSMUSP00000095965.4"/>
    <property type="gene ID" value="ENSMUSG00000031835.17"/>
</dbReference>
<dbReference type="GeneID" id="56453"/>
<dbReference type="KEGG" id="mmu:56453"/>
<dbReference type="UCSC" id="uc009nps.2">
    <property type="organism name" value="mouse"/>
</dbReference>
<dbReference type="AGR" id="MGI:1927235"/>
<dbReference type="CTD" id="8720"/>
<dbReference type="MGI" id="MGI:1927235">
    <property type="gene designation" value="Mbtps1"/>
</dbReference>
<dbReference type="VEuPathDB" id="HostDB:ENSMUSG00000031835"/>
<dbReference type="eggNOG" id="KOG4266">
    <property type="taxonomic scope" value="Eukaryota"/>
</dbReference>
<dbReference type="GeneTree" id="ENSGT00490000043404"/>
<dbReference type="HOGENOM" id="CLU_004504_1_0_1"/>
<dbReference type="InParanoid" id="Q9WTZ2"/>
<dbReference type="OMA" id="LEYTTTG"/>
<dbReference type="OrthoDB" id="1740355at2759"/>
<dbReference type="PhylomeDB" id="Q9WTZ2"/>
<dbReference type="TreeFam" id="TF324501"/>
<dbReference type="Reactome" id="R-MMU-1655829">
    <property type="pathway name" value="Regulation of cholesterol biosynthesis by SREBP (SREBF)"/>
</dbReference>
<dbReference type="Reactome" id="R-MMU-381033">
    <property type="pathway name" value="ATF6 (ATF6-alpha) activates chaperones"/>
</dbReference>
<dbReference type="Reactome" id="R-MMU-381426">
    <property type="pathway name" value="Regulation of Insulin-like Growth Factor (IGF) transport and uptake by Insulin-like Growth Factor Binding Proteins (IGFBPs)"/>
</dbReference>
<dbReference type="Reactome" id="R-MMU-8874177">
    <property type="pathway name" value="ATF6B (ATF6-beta) activates chaperones"/>
</dbReference>
<dbReference type="Reactome" id="R-MMU-8874211">
    <property type="pathway name" value="CREB3 factors activate genes"/>
</dbReference>
<dbReference type="Reactome" id="R-MMU-8957275">
    <property type="pathway name" value="Post-translational protein phosphorylation"/>
</dbReference>
<dbReference type="BioGRID-ORCS" id="56453">
    <property type="hits" value="29 hits in 78 CRISPR screens"/>
</dbReference>
<dbReference type="ChiTaRS" id="Mbtps1">
    <property type="organism name" value="mouse"/>
</dbReference>
<dbReference type="PRO" id="PR:Q9WTZ2"/>
<dbReference type="Proteomes" id="UP000000589">
    <property type="component" value="Chromosome 8"/>
</dbReference>
<dbReference type="RNAct" id="Q9WTZ2">
    <property type="molecule type" value="protein"/>
</dbReference>
<dbReference type="Bgee" id="ENSMUSG00000031835">
    <property type="expression patterns" value="Expressed in saccule of membranous labyrinth and 272 other cell types or tissues"/>
</dbReference>
<dbReference type="GO" id="GO:0005789">
    <property type="term" value="C:endoplasmic reticulum membrane"/>
    <property type="evidence" value="ECO:0000304"/>
    <property type="project" value="Reactome"/>
</dbReference>
<dbReference type="GO" id="GO:0000139">
    <property type="term" value="C:Golgi membrane"/>
    <property type="evidence" value="ECO:0000304"/>
    <property type="project" value="Reactome"/>
</dbReference>
<dbReference type="GO" id="GO:0005795">
    <property type="term" value="C:Golgi stack"/>
    <property type="evidence" value="ECO:0000314"/>
    <property type="project" value="MGI"/>
</dbReference>
<dbReference type="GO" id="GO:0004175">
    <property type="term" value="F:endopeptidase activity"/>
    <property type="evidence" value="ECO:0000314"/>
    <property type="project" value="MGI"/>
</dbReference>
<dbReference type="GO" id="GO:0004222">
    <property type="term" value="F:metalloendopeptidase activity"/>
    <property type="evidence" value="ECO:0000304"/>
    <property type="project" value="Reactome"/>
</dbReference>
<dbReference type="GO" id="GO:0004252">
    <property type="term" value="F:serine-type endopeptidase activity"/>
    <property type="evidence" value="ECO:0000314"/>
    <property type="project" value="MGI"/>
</dbReference>
<dbReference type="GO" id="GO:0008203">
    <property type="term" value="P:cholesterol metabolic process"/>
    <property type="evidence" value="ECO:0007669"/>
    <property type="project" value="UniProtKB-KW"/>
</dbReference>
<dbReference type="GO" id="GO:0006629">
    <property type="term" value="P:lipid metabolic process"/>
    <property type="evidence" value="ECO:0000315"/>
    <property type="project" value="MGI"/>
</dbReference>
<dbReference type="GO" id="GO:0007040">
    <property type="term" value="P:lysosome organization"/>
    <property type="evidence" value="ECO:0000250"/>
    <property type="project" value="UniProtKB"/>
</dbReference>
<dbReference type="GO" id="GO:0031293">
    <property type="term" value="P:membrane protein intracellular domain proteolysis"/>
    <property type="evidence" value="ECO:0000314"/>
    <property type="project" value="UniProt"/>
</dbReference>
<dbReference type="GO" id="GO:0007095">
    <property type="term" value="P:mitotic G2 DNA damage checkpoint signaling"/>
    <property type="evidence" value="ECO:0000314"/>
    <property type="project" value="UniProt"/>
</dbReference>
<dbReference type="GO" id="GO:0006606">
    <property type="term" value="P:protein import into nucleus"/>
    <property type="evidence" value="ECO:0000314"/>
    <property type="project" value="MGI"/>
</dbReference>
<dbReference type="GO" id="GO:0016485">
    <property type="term" value="P:protein processing"/>
    <property type="evidence" value="ECO:0000250"/>
    <property type="project" value="UniProtKB"/>
</dbReference>
<dbReference type="GO" id="GO:0006508">
    <property type="term" value="P:proteolysis"/>
    <property type="evidence" value="ECO:0000250"/>
    <property type="project" value="UniProtKB"/>
</dbReference>
<dbReference type="GO" id="GO:0060627">
    <property type="term" value="P:regulation of vesicle-mediated transport"/>
    <property type="evidence" value="ECO:0007669"/>
    <property type="project" value="Ensembl"/>
</dbReference>
<dbReference type="CDD" id="cd07479">
    <property type="entry name" value="Peptidases_S8_SKI-1_like"/>
    <property type="match status" value="1"/>
</dbReference>
<dbReference type="FunFam" id="3.40.50.200:FF:000008">
    <property type="entry name" value="Membrane-bound transcription factor site-1 protease preproprotein"/>
    <property type="match status" value="1"/>
</dbReference>
<dbReference type="Gene3D" id="3.40.50.200">
    <property type="entry name" value="Peptidase S8/S53 domain"/>
    <property type="match status" value="1"/>
</dbReference>
<dbReference type="InterPro" id="IPR055143">
    <property type="entry name" value="MBTP1_N"/>
</dbReference>
<dbReference type="InterPro" id="IPR057060">
    <property type="entry name" value="MBTPS1_3rd"/>
</dbReference>
<dbReference type="InterPro" id="IPR057032">
    <property type="entry name" value="MBTPS1_4th"/>
</dbReference>
<dbReference type="InterPro" id="IPR000209">
    <property type="entry name" value="Peptidase_S8/S53_dom"/>
</dbReference>
<dbReference type="InterPro" id="IPR036852">
    <property type="entry name" value="Peptidase_S8/S53_dom_sf"/>
</dbReference>
<dbReference type="InterPro" id="IPR022398">
    <property type="entry name" value="Peptidase_S8_His-AS"/>
</dbReference>
<dbReference type="InterPro" id="IPR023828">
    <property type="entry name" value="Peptidase_S8_Ser-AS"/>
</dbReference>
<dbReference type="InterPro" id="IPR050131">
    <property type="entry name" value="Peptidase_S8_subtilisin-like"/>
</dbReference>
<dbReference type="InterPro" id="IPR015500">
    <property type="entry name" value="Peptidase_S8_subtilisin-rel"/>
</dbReference>
<dbReference type="InterPro" id="IPR034185">
    <property type="entry name" value="Site-1_peptidase_cat_dom"/>
</dbReference>
<dbReference type="PANTHER" id="PTHR43806:SF7">
    <property type="entry name" value="MEMBRANE-BOUND TRANSCRIPTION FACTOR SITE-1 PROTEASE"/>
    <property type="match status" value="1"/>
</dbReference>
<dbReference type="PANTHER" id="PTHR43806">
    <property type="entry name" value="PEPTIDASE S8"/>
    <property type="match status" value="1"/>
</dbReference>
<dbReference type="Pfam" id="PF23001">
    <property type="entry name" value="MBTP1_N"/>
    <property type="match status" value="1"/>
</dbReference>
<dbReference type="Pfam" id="PF23094">
    <property type="entry name" value="MBTPS1_3rd"/>
    <property type="match status" value="1"/>
</dbReference>
<dbReference type="Pfam" id="PF23090">
    <property type="entry name" value="MBTPS1_4th"/>
    <property type="match status" value="1"/>
</dbReference>
<dbReference type="Pfam" id="PF00082">
    <property type="entry name" value="Peptidase_S8"/>
    <property type="match status" value="1"/>
</dbReference>
<dbReference type="PRINTS" id="PR00723">
    <property type="entry name" value="SUBTILISIN"/>
</dbReference>
<dbReference type="SUPFAM" id="SSF52743">
    <property type="entry name" value="Subtilisin-like"/>
    <property type="match status" value="1"/>
</dbReference>
<dbReference type="PROSITE" id="PS51892">
    <property type="entry name" value="SUBTILASE"/>
    <property type="match status" value="1"/>
</dbReference>
<dbReference type="PROSITE" id="PS00137">
    <property type="entry name" value="SUBTILASE_HIS"/>
    <property type="match status" value="1"/>
</dbReference>
<dbReference type="PROSITE" id="PS00138">
    <property type="entry name" value="SUBTILASE_SER"/>
    <property type="match status" value="1"/>
</dbReference>
<reference key="1">
    <citation type="journal article" date="1999" name="Proc. Natl. Acad. Sci. U.S.A.">
        <title>Mammalian subtilisin/kexin isozyme SKI-1: a widely expressed proprotein convertase with a unique cleavage specificity and cellular localization.</title>
        <authorList>
            <person name="Seidah N.G."/>
            <person name="Mowla S.J."/>
            <person name="Hamelin J."/>
            <person name="Mamarbachi A.M."/>
            <person name="Benjannet S."/>
            <person name="Toure B.B."/>
            <person name="Basak A."/>
            <person name="Munzer J.S."/>
            <person name="Marcinkiewicz J."/>
            <person name="Zhong M."/>
            <person name="Barale J.-C."/>
            <person name="Lazure C."/>
            <person name="Murphy R.A."/>
            <person name="Chretien M."/>
            <person name="Marcinkiewicz M."/>
        </authorList>
    </citation>
    <scope>NUCLEOTIDE SEQUENCE [MRNA]</scope>
    <scope>FUNCTION</scope>
    <scope>CATALYTIC ACTIVITY</scope>
    <source>
        <tissue>Pituitary</tissue>
    </source>
</reference>
<reference key="2">
    <citation type="journal article" date="2005" name="Science">
        <title>The transcriptional landscape of the mammalian genome.</title>
        <authorList>
            <person name="Carninci P."/>
            <person name="Kasukawa T."/>
            <person name="Katayama S."/>
            <person name="Gough J."/>
            <person name="Frith M.C."/>
            <person name="Maeda N."/>
            <person name="Oyama R."/>
            <person name="Ravasi T."/>
            <person name="Lenhard B."/>
            <person name="Wells C."/>
            <person name="Kodzius R."/>
            <person name="Shimokawa K."/>
            <person name="Bajic V.B."/>
            <person name="Brenner S.E."/>
            <person name="Batalov S."/>
            <person name="Forrest A.R."/>
            <person name="Zavolan M."/>
            <person name="Davis M.J."/>
            <person name="Wilming L.G."/>
            <person name="Aidinis V."/>
            <person name="Allen J.E."/>
            <person name="Ambesi-Impiombato A."/>
            <person name="Apweiler R."/>
            <person name="Aturaliya R.N."/>
            <person name="Bailey T.L."/>
            <person name="Bansal M."/>
            <person name="Baxter L."/>
            <person name="Beisel K.W."/>
            <person name="Bersano T."/>
            <person name="Bono H."/>
            <person name="Chalk A.M."/>
            <person name="Chiu K.P."/>
            <person name="Choudhary V."/>
            <person name="Christoffels A."/>
            <person name="Clutterbuck D.R."/>
            <person name="Crowe M.L."/>
            <person name="Dalla E."/>
            <person name="Dalrymple B.P."/>
            <person name="de Bono B."/>
            <person name="Della Gatta G."/>
            <person name="di Bernardo D."/>
            <person name="Down T."/>
            <person name="Engstrom P."/>
            <person name="Fagiolini M."/>
            <person name="Faulkner G."/>
            <person name="Fletcher C.F."/>
            <person name="Fukushima T."/>
            <person name="Furuno M."/>
            <person name="Futaki S."/>
            <person name="Gariboldi M."/>
            <person name="Georgii-Hemming P."/>
            <person name="Gingeras T.R."/>
            <person name="Gojobori T."/>
            <person name="Green R.E."/>
            <person name="Gustincich S."/>
            <person name="Harbers M."/>
            <person name="Hayashi Y."/>
            <person name="Hensch T.K."/>
            <person name="Hirokawa N."/>
            <person name="Hill D."/>
            <person name="Huminiecki L."/>
            <person name="Iacono M."/>
            <person name="Ikeo K."/>
            <person name="Iwama A."/>
            <person name="Ishikawa T."/>
            <person name="Jakt M."/>
            <person name="Kanapin A."/>
            <person name="Katoh M."/>
            <person name="Kawasawa Y."/>
            <person name="Kelso J."/>
            <person name="Kitamura H."/>
            <person name="Kitano H."/>
            <person name="Kollias G."/>
            <person name="Krishnan S.P."/>
            <person name="Kruger A."/>
            <person name="Kummerfeld S.K."/>
            <person name="Kurochkin I.V."/>
            <person name="Lareau L.F."/>
            <person name="Lazarevic D."/>
            <person name="Lipovich L."/>
            <person name="Liu J."/>
            <person name="Liuni S."/>
            <person name="McWilliam S."/>
            <person name="Madan Babu M."/>
            <person name="Madera M."/>
            <person name="Marchionni L."/>
            <person name="Matsuda H."/>
            <person name="Matsuzawa S."/>
            <person name="Miki H."/>
            <person name="Mignone F."/>
            <person name="Miyake S."/>
            <person name="Morris K."/>
            <person name="Mottagui-Tabar S."/>
            <person name="Mulder N."/>
            <person name="Nakano N."/>
            <person name="Nakauchi H."/>
            <person name="Ng P."/>
            <person name="Nilsson R."/>
            <person name="Nishiguchi S."/>
            <person name="Nishikawa S."/>
            <person name="Nori F."/>
            <person name="Ohara O."/>
            <person name="Okazaki Y."/>
            <person name="Orlando V."/>
            <person name="Pang K.C."/>
            <person name="Pavan W.J."/>
            <person name="Pavesi G."/>
            <person name="Pesole G."/>
            <person name="Petrovsky N."/>
            <person name="Piazza S."/>
            <person name="Reed J."/>
            <person name="Reid J.F."/>
            <person name="Ring B.Z."/>
            <person name="Ringwald M."/>
            <person name="Rost B."/>
            <person name="Ruan Y."/>
            <person name="Salzberg S.L."/>
            <person name="Sandelin A."/>
            <person name="Schneider C."/>
            <person name="Schoenbach C."/>
            <person name="Sekiguchi K."/>
            <person name="Semple C.A."/>
            <person name="Seno S."/>
            <person name="Sessa L."/>
            <person name="Sheng Y."/>
            <person name="Shibata Y."/>
            <person name="Shimada H."/>
            <person name="Shimada K."/>
            <person name="Silva D."/>
            <person name="Sinclair B."/>
            <person name="Sperling S."/>
            <person name="Stupka E."/>
            <person name="Sugiura K."/>
            <person name="Sultana R."/>
            <person name="Takenaka Y."/>
            <person name="Taki K."/>
            <person name="Tammoja K."/>
            <person name="Tan S.L."/>
            <person name="Tang S."/>
            <person name="Taylor M.S."/>
            <person name="Tegner J."/>
            <person name="Teichmann S.A."/>
            <person name="Ueda H.R."/>
            <person name="van Nimwegen E."/>
            <person name="Verardo R."/>
            <person name="Wei C.L."/>
            <person name="Yagi K."/>
            <person name="Yamanishi H."/>
            <person name="Zabarovsky E."/>
            <person name="Zhu S."/>
            <person name="Zimmer A."/>
            <person name="Hide W."/>
            <person name="Bult C."/>
            <person name="Grimmond S.M."/>
            <person name="Teasdale R.D."/>
            <person name="Liu E.T."/>
            <person name="Brusic V."/>
            <person name="Quackenbush J."/>
            <person name="Wahlestedt C."/>
            <person name="Mattick J.S."/>
            <person name="Hume D.A."/>
            <person name="Kai C."/>
            <person name="Sasaki D."/>
            <person name="Tomaru Y."/>
            <person name="Fukuda S."/>
            <person name="Kanamori-Katayama M."/>
            <person name="Suzuki M."/>
            <person name="Aoki J."/>
            <person name="Arakawa T."/>
            <person name="Iida J."/>
            <person name="Imamura K."/>
            <person name="Itoh M."/>
            <person name="Kato T."/>
            <person name="Kawaji H."/>
            <person name="Kawagashira N."/>
            <person name="Kawashima T."/>
            <person name="Kojima M."/>
            <person name="Kondo S."/>
            <person name="Konno H."/>
            <person name="Nakano K."/>
            <person name="Ninomiya N."/>
            <person name="Nishio T."/>
            <person name="Okada M."/>
            <person name="Plessy C."/>
            <person name="Shibata K."/>
            <person name="Shiraki T."/>
            <person name="Suzuki S."/>
            <person name="Tagami M."/>
            <person name="Waki K."/>
            <person name="Watahiki A."/>
            <person name="Okamura-Oho Y."/>
            <person name="Suzuki H."/>
            <person name="Kawai J."/>
            <person name="Hayashizaki Y."/>
        </authorList>
    </citation>
    <scope>NUCLEOTIDE SEQUENCE [LARGE SCALE MRNA]</scope>
    <source>
        <strain>C57BL/6J</strain>
        <tissue>Skin</tissue>
    </source>
</reference>
<reference key="3">
    <citation type="journal article" date="2004" name="Genome Res.">
        <title>The status, quality, and expansion of the NIH full-length cDNA project: the Mammalian Gene Collection (MGC).</title>
        <authorList>
            <consortium name="The MGC Project Team"/>
        </authorList>
    </citation>
    <scope>NUCLEOTIDE SEQUENCE [LARGE SCALE MRNA]</scope>
    <source>
        <strain>C57BL/6J</strain>
        <strain>NMRI</strain>
        <tissue>Mammary gland</tissue>
        <tissue>Retina</tissue>
    </source>
</reference>
<reference key="4">
    <citation type="journal article" date="2021" name="Proc. Natl. Acad. Sci. U.S.A.">
        <title>Proteolytic processing of secretory pathway kinase Fam20C by site-1 protease promotes biomineralization.</title>
        <authorList>
            <person name="Chen X."/>
            <person name="Zhang J."/>
            <person name="Liu P."/>
            <person name="Wei Y."/>
            <person name="Wang X."/>
            <person name="Xiao J."/>
            <person name="Wang C.C."/>
            <person name="Wang L."/>
        </authorList>
    </citation>
    <scope>FUNCTION</scope>
</reference>
<proteinExistence type="evidence at protein level"/>
<name>MBTP1_MOUSE</name>
<evidence type="ECO:0000250" key="1">
    <source>
        <dbReference type="UniProtKB" id="Q14703"/>
    </source>
</evidence>
<evidence type="ECO:0000255" key="2"/>
<evidence type="ECO:0000255" key="3">
    <source>
        <dbReference type="PROSITE-ProRule" id="PRU01240"/>
    </source>
</evidence>
<evidence type="ECO:0000256" key="4">
    <source>
        <dbReference type="SAM" id="MobiDB-lite"/>
    </source>
</evidence>
<evidence type="ECO:0000269" key="5">
    <source>
    </source>
</evidence>
<evidence type="ECO:0000269" key="6">
    <source>
    </source>
</evidence>
<evidence type="ECO:0000303" key="7">
    <source>
    </source>
</evidence>
<evidence type="ECO:0000305" key="8"/>